<comment type="function">
    <text evidence="1">Involved in the transport of maltose and maltodextrins.</text>
</comment>
<comment type="catalytic activity">
    <reaction evidence="1">
        <text>beta-maltose(in) = beta-maltose(out)</text>
        <dbReference type="Rhea" id="RHEA:29731"/>
        <dbReference type="ChEBI" id="CHEBI:18147"/>
    </reaction>
</comment>
<comment type="subunit">
    <text evidence="1">Homotrimer formed of three 18-stranded antiparallel beta-barrels, containing three independent channels.</text>
</comment>
<comment type="subcellular location">
    <subcellularLocation>
        <location evidence="1">Cell outer membrane</location>
        <topology evidence="1">Multi-pass membrane protein</topology>
    </subcellularLocation>
</comment>
<comment type="induction">
    <text evidence="1">By maltose.</text>
</comment>
<comment type="similarity">
    <text evidence="1">Belongs to the porin LamB (TC 1.B.3) family.</text>
</comment>
<accession>B1LPK1</accession>
<protein>
    <recommendedName>
        <fullName evidence="1">Maltoporin</fullName>
    </recommendedName>
    <alternativeName>
        <fullName evidence="1">Maltose-inducible porin</fullName>
    </alternativeName>
</protein>
<proteinExistence type="inferred from homology"/>
<gene>
    <name evidence="1" type="primary">lamB</name>
    <name type="ordered locus">EcSMS35_4498</name>
</gene>
<name>LAMB_ECOSM</name>
<evidence type="ECO:0000255" key="1">
    <source>
        <dbReference type="HAMAP-Rule" id="MF_01301"/>
    </source>
</evidence>
<keyword id="KW-0998">Cell outer membrane</keyword>
<keyword id="KW-0406">Ion transport</keyword>
<keyword id="KW-0472">Membrane</keyword>
<keyword id="KW-0626">Porin</keyword>
<keyword id="KW-0732">Signal</keyword>
<keyword id="KW-0762">Sugar transport</keyword>
<keyword id="KW-0812">Transmembrane</keyword>
<keyword id="KW-1134">Transmembrane beta strand</keyword>
<keyword id="KW-0813">Transport</keyword>
<organism>
    <name type="scientific">Escherichia coli (strain SMS-3-5 / SECEC)</name>
    <dbReference type="NCBI Taxonomy" id="439855"/>
    <lineage>
        <taxon>Bacteria</taxon>
        <taxon>Pseudomonadati</taxon>
        <taxon>Pseudomonadota</taxon>
        <taxon>Gammaproteobacteria</taxon>
        <taxon>Enterobacterales</taxon>
        <taxon>Enterobacteriaceae</taxon>
        <taxon>Escherichia</taxon>
    </lineage>
</organism>
<sequence>MMITLRKLPLAVAVAAGVMSAQAMAVDFHGYARSGIGWTGSGGEQQCFQTTGAQSKYRLGNECETYAELKLGQEVWKEGDKSFYFDTNVAYSVAQQNDWEATDPAFREANVQGKNLIEWLPGSTIWAGKRFYQRHDVHMIDFYYWDISGPGAGLENIDVGFGKLSLAATRSSEAGGSSSFASNNIYDYTNETANDVFDVRLAQMEINPGGTLELGVDYGRANLRDNYRLVDGASKDGWLFTAEHTQSVLKGFNKFVVQYATDSMTSQGKGLSQGSGVAFDNEKFAYNINNNGHMLRILDHGAISMGDNWDMMYVGMYQDINWDNDNGTKWWTVGIRPMYKWTPIMSTVMEIGYDNVESQRTGDKNNQYKITLAQQWQAGDSIWSRPAIRVFATYAKWDEKWGYDYTGNANTNTNFGKAVPADFNGGSFGRGDSDEWTFGAQMEIWW</sequence>
<reference key="1">
    <citation type="journal article" date="2008" name="J. Bacteriol.">
        <title>Insights into the environmental resistance gene pool from the genome sequence of the multidrug-resistant environmental isolate Escherichia coli SMS-3-5.</title>
        <authorList>
            <person name="Fricke W.F."/>
            <person name="Wright M.S."/>
            <person name="Lindell A.H."/>
            <person name="Harkins D.M."/>
            <person name="Baker-Austin C."/>
            <person name="Ravel J."/>
            <person name="Stepanauskas R."/>
        </authorList>
    </citation>
    <scope>NUCLEOTIDE SEQUENCE [LARGE SCALE GENOMIC DNA]</scope>
    <source>
        <strain>SMS-3-5 / SECEC</strain>
    </source>
</reference>
<feature type="signal peptide" evidence="1">
    <location>
        <begin position="1"/>
        <end position="25"/>
    </location>
</feature>
<feature type="chain" id="PRO_1000140487" description="Maltoporin">
    <location>
        <begin position="26"/>
        <end position="446"/>
    </location>
</feature>
<feature type="site" description="Greasy slide, important in sugar transport" evidence="1">
    <location>
        <position position="31"/>
    </location>
</feature>
<feature type="site" description="Greasy slide, important in sugar transport" evidence="1">
    <location>
        <position position="66"/>
    </location>
</feature>
<feature type="site" description="Greasy slide, important in sugar transport" evidence="1">
    <location>
        <position position="99"/>
    </location>
</feature>
<feature type="site" description="Important in sugar transport" evidence="1">
    <location>
        <position position="143"/>
    </location>
</feature>
<feature type="site" description="Greasy slide, important in sugar transport" evidence="1">
    <location>
        <position position="252"/>
    </location>
</feature>
<feature type="site" description="Greasy slide, important in sugar transport" evidence="1">
    <location>
        <position position="383"/>
    </location>
</feature>
<feature type="site" description="Greasy slide, important in sugar transport" evidence="1">
    <location>
        <position position="445"/>
    </location>
</feature>
<dbReference type="EMBL" id="CP000970">
    <property type="protein sequence ID" value="ACB20199.1"/>
    <property type="molecule type" value="Genomic_DNA"/>
</dbReference>
<dbReference type="RefSeq" id="WP_000973665.1">
    <property type="nucleotide sequence ID" value="NC_010498.1"/>
</dbReference>
<dbReference type="SMR" id="B1LPK1"/>
<dbReference type="KEGG" id="ecm:EcSMS35_4498"/>
<dbReference type="HOGENOM" id="CLU_032473_4_1_6"/>
<dbReference type="Proteomes" id="UP000007011">
    <property type="component" value="Chromosome"/>
</dbReference>
<dbReference type="GO" id="GO:0009279">
    <property type="term" value="C:cell outer membrane"/>
    <property type="evidence" value="ECO:0007669"/>
    <property type="project" value="UniProtKB-SubCell"/>
</dbReference>
<dbReference type="GO" id="GO:0046930">
    <property type="term" value="C:pore complex"/>
    <property type="evidence" value="ECO:0007669"/>
    <property type="project" value="UniProtKB-KW"/>
</dbReference>
<dbReference type="GO" id="GO:0042958">
    <property type="term" value="F:maltodextrin transmembrane transporter activity"/>
    <property type="evidence" value="ECO:0007669"/>
    <property type="project" value="InterPro"/>
</dbReference>
<dbReference type="GO" id="GO:0015481">
    <property type="term" value="F:maltose transporting porin activity"/>
    <property type="evidence" value="ECO:0007669"/>
    <property type="project" value="InterPro"/>
</dbReference>
<dbReference type="GO" id="GO:0006811">
    <property type="term" value="P:monoatomic ion transport"/>
    <property type="evidence" value="ECO:0007669"/>
    <property type="project" value="UniProtKB-KW"/>
</dbReference>
<dbReference type="CDD" id="cd01346">
    <property type="entry name" value="Maltoporin-like"/>
    <property type="match status" value="1"/>
</dbReference>
<dbReference type="FunFam" id="2.40.170.10:FF:000001">
    <property type="entry name" value="Maltoporin"/>
    <property type="match status" value="1"/>
</dbReference>
<dbReference type="Gene3D" id="2.40.170.10">
    <property type="entry name" value="Porin, LamB type"/>
    <property type="match status" value="1"/>
</dbReference>
<dbReference type="HAMAP" id="MF_01301">
    <property type="entry name" value="LamB"/>
    <property type="match status" value="1"/>
</dbReference>
<dbReference type="InterPro" id="IPR050286">
    <property type="entry name" value="G_neg_Bact_CarbUptk_Porin"/>
</dbReference>
<dbReference type="InterPro" id="IPR023738">
    <property type="entry name" value="Maltoporin"/>
</dbReference>
<dbReference type="InterPro" id="IPR003192">
    <property type="entry name" value="Porin_LamB"/>
</dbReference>
<dbReference type="InterPro" id="IPR036998">
    <property type="entry name" value="Porin_LamB_sf"/>
</dbReference>
<dbReference type="NCBIfam" id="NF006860">
    <property type="entry name" value="PRK09360.1"/>
    <property type="match status" value="1"/>
</dbReference>
<dbReference type="PANTHER" id="PTHR38762">
    <property type="entry name" value="CRYPTIC OUTER MEMBRANE PORIN BGLH-RELATED"/>
    <property type="match status" value="1"/>
</dbReference>
<dbReference type="PANTHER" id="PTHR38762:SF1">
    <property type="entry name" value="CRYPTIC OUTER MEMBRANE PORIN BGLH-RELATED"/>
    <property type="match status" value="1"/>
</dbReference>
<dbReference type="Pfam" id="PF02264">
    <property type="entry name" value="LamB"/>
    <property type="match status" value="1"/>
</dbReference>
<dbReference type="SUPFAM" id="SSF56935">
    <property type="entry name" value="Porins"/>
    <property type="match status" value="1"/>
</dbReference>